<sequence length="538" mass="59958">MENKTPIFFSLSIFLSLLNCALGGNDLLSCLTFNGVRNHTVFSADSDSDFNRFLHLSIQNPLFQNSLISKPSAIILPGSKEELSNTIRCIRKGSWTIRLRSGGHSYEGLSYTSDTPFILIDLMNLNRVSIDLESETAWVESGSTLGELYYAITESSSKLGFTAGWCPTVGTGGHISGGGFGMMSRKYGLAADNVVDAILIDANGAILDRQAMGEDVFWAIRGGGGGVWGAIYAWKIKLLPVPEKVTVFRVTKNVAIDEATSLLHKWQFVAEELEEDFTLSVLGGADEKQVWLTMLGFHFGLKTVAKSTFDLLFPELGLVEEDYLEMSWGESFAYLAGLETVSQLNNRFLKFDERAFKTKVDLTKEPLPSKAFYGLLERLSKEPNGFIALNGFGGQMSKISSDFTPFPHRSGTRLMVEYIVAWNQSEQKKKTEFLDWLEKVYEFMKPFVSKNPRLGYVNHIDLDLGGIDWGNKTVVNNAIEISRSWGESYFLSNYERLIRAKTLIDPNNVFNHPQSIPPMANFDYLEKTLGSDGGEVVI</sequence>
<accession>P30986</accession>
<comment type="function">
    <text>Essential to the formation of benzophenanthridine alkaloids in the response of plants to pathogenic attack. Catalyzes the stereospecific conversion of the N-methyl moiety of (S)-reticuline into the berberine bridge carbon of (S)-scoulerine.</text>
</comment>
<comment type="catalytic activity">
    <reaction>
        <text>(S)-reticuline + O2 = (S)-scoulerine + H2O2 + H(+)</text>
        <dbReference type="Rhea" id="RHEA:19885"/>
        <dbReference type="ChEBI" id="CHEBI:15378"/>
        <dbReference type="ChEBI" id="CHEBI:15379"/>
        <dbReference type="ChEBI" id="CHEBI:16240"/>
        <dbReference type="ChEBI" id="CHEBI:17129"/>
        <dbReference type="ChEBI" id="CHEBI:57873"/>
        <dbReference type="EC" id="1.21.3.3"/>
    </reaction>
</comment>
<comment type="cofactor">
    <cofactor evidence="3 4">
        <name>FAD</name>
        <dbReference type="ChEBI" id="CHEBI:57692"/>
    </cofactor>
    <text evidence="3 4">Binds 1 FAD per subunit in a bicovalent manner.</text>
</comment>
<comment type="cofactor">
    <cofactor>
        <name>a metal cation</name>
        <dbReference type="ChEBI" id="CHEBI:25213"/>
    </cofactor>
</comment>
<comment type="pathway">
    <text>Alkaloid biosynthesis; (S)-scoulerine biosynthesis; (S)-scoulerine from (S)-reticuline: step 1/1.</text>
</comment>
<comment type="subcellular location">
    <subcellularLocation>
        <location evidence="6">Cytoplasmic vesicle</location>
    </subcellularLocation>
    <text evidence="6">Found in cytoplasmic vesicles that are highly specific and unique compartments serving only alkaloid biosynthesis. The protein composition of these vesicles reveals the presence of only about 20 separable proteins.</text>
</comment>
<comment type="PTM">
    <text evidence="3 4">The FAD cofactor is bound via a bicovalent 6-S-cysteinyl, 8alpha-N1-histidyl FAD linkage.</text>
</comment>
<comment type="similarity">
    <text evidence="7">Belongs to the oxygen-dependent FAD-linked oxidoreductase family.</text>
</comment>
<protein>
    <recommendedName>
        <fullName>Reticuline oxidase</fullName>
        <ecNumber>1.21.3.3</ecNumber>
    </recommendedName>
    <alternativeName>
        <fullName>Berberine bridge-forming enzyme</fullName>
        <shortName>BBE</shortName>
    </alternativeName>
    <alternativeName>
        <fullName>Tetrahydroprotoberberine synthase</fullName>
    </alternativeName>
</protein>
<feature type="signal peptide" evidence="5">
    <location>
        <begin position="1"/>
        <end position="23"/>
    </location>
</feature>
<feature type="chain" id="PRO_0000020425" description="Reticuline oxidase">
    <location>
        <begin position="24"/>
        <end position="538"/>
    </location>
</feature>
<feature type="domain" description="FAD-binding PCMH-type" evidence="2">
    <location>
        <begin position="67"/>
        <end position="241"/>
    </location>
</feature>
<feature type="glycosylation site" description="N-linked (GlcNAc...) asparagine" evidence="3 4">
    <location>
        <position position="38"/>
    </location>
</feature>
<feature type="glycosylation site" description="N-linked (GlcNAc...) asparagine" evidence="1">
    <location>
        <position position="423"/>
    </location>
</feature>
<feature type="glycosylation site" description="N-linked (GlcNAc...) asparagine" evidence="4">
    <location>
        <position position="471"/>
    </location>
</feature>
<feature type="disulfide bond" evidence="4">
    <location>
        <begin position="30"/>
        <end position="89"/>
    </location>
</feature>
<feature type="cross-link" description="6-(S-cysteinyl)-8alpha-(pros-histidyl)-FAD (His-Cys)" evidence="3 4">
    <location>
        <begin position="104"/>
        <end position="166"/>
    </location>
</feature>
<feature type="helix" evidence="15">
    <location>
        <begin position="27"/>
        <end position="33"/>
    </location>
</feature>
<feature type="strand" evidence="15">
    <location>
        <begin position="39"/>
        <end position="41"/>
    </location>
</feature>
<feature type="strand" evidence="12">
    <location>
        <begin position="46"/>
        <end position="48"/>
    </location>
</feature>
<feature type="helix" evidence="15">
    <location>
        <begin position="49"/>
        <end position="56"/>
    </location>
</feature>
<feature type="helix" evidence="15">
    <location>
        <begin position="61"/>
        <end position="63"/>
    </location>
</feature>
<feature type="strand" evidence="14">
    <location>
        <begin position="65"/>
        <end position="68"/>
    </location>
</feature>
<feature type="strand" evidence="15">
    <location>
        <begin position="72"/>
        <end position="75"/>
    </location>
</feature>
<feature type="helix" evidence="15">
    <location>
        <begin position="80"/>
        <end position="91"/>
    </location>
</feature>
<feature type="turn" evidence="16">
    <location>
        <begin position="92"/>
        <end position="94"/>
    </location>
</feature>
<feature type="strand" evidence="15">
    <location>
        <begin position="96"/>
        <end position="102"/>
    </location>
</feature>
<feature type="turn" evidence="13">
    <location>
        <begin position="109"/>
        <end position="111"/>
    </location>
</feature>
<feature type="strand" evidence="15">
    <location>
        <begin position="117"/>
        <end position="121"/>
    </location>
</feature>
<feature type="strand" evidence="15">
    <location>
        <begin position="128"/>
        <end position="131"/>
    </location>
</feature>
<feature type="turn" evidence="15">
    <location>
        <begin position="132"/>
        <end position="135"/>
    </location>
</feature>
<feature type="strand" evidence="15">
    <location>
        <begin position="136"/>
        <end position="140"/>
    </location>
</feature>
<feature type="helix" evidence="15">
    <location>
        <begin position="145"/>
        <end position="155"/>
    </location>
</feature>
<feature type="strand" evidence="15">
    <location>
        <begin position="157"/>
        <end position="160"/>
    </location>
</feature>
<feature type="helix" evidence="15">
    <location>
        <begin position="171"/>
        <end position="176"/>
    </location>
</feature>
<feature type="helix" evidence="15">
    <location>
        <begin position="184"/>
        <end position="187"/>
    </location>
</feature>
<feature type="helix" evidence="15">
    <location>
        <begin position="190"/>
        <end position="193"/>
    </location>
</feature>
<feature type="strand" evidence="15">
    <location>
        <begin position="194"/>
        <end position="200"/>
    </location>
</feature>
<feature type="helix" evidence="15">
    <location>
        <begin position="209"/>
        <end position="212"/>
    </location>
</feature>
<feature type="helix" evidence="15">
    <location>
        <begin position="214"/>
        <end position="220"/>
    </location>
</feature>
<feature type="strand" evidence="17">
    <location>
        <begin position="225"/>
        <end position="228"/>
    </location>
</feature>
<feature type="strand" evidence="15">
    <location>
        <begin position="230"/>
        <end position="237"/>
    </location>
</feature>
<feature type="strand" evidence="15">
    <location>
        <begin position="243"/>
        <end position="254"/>
    </location>
</feature>
<feature type="helix" evidence="15">
    <location>
        <begin position="256"/>
        <end position="272"/>
    </location>
</feature>
<feature type="strand" evidence="15">
    <location>
        <begin position="277"/>
        <end position="286"/>
    </location>
</feature>
<feature type="strand" evidence="15">
    <location>
        <begin position="289"/>
        <end position="300"/>
    </location>
</feature>
<feature type="helix" evidence="15">
    <location>
        <begin position="302"/>
        <end position="312"/>
    </location>
</feature>
<feature type="helix" evidence="15">
    <location>
        <begin position="314"/>
        <end position="316"/>
    </location>
</feature>
<feature type="helix" evidence="15">
    <location>
        <begin position="320"/>
        <end position="322"/>
    </location>
</feature>
<feature type="strand" evidence="15">
    <location>
        <begin position="324"/>
        <end position="326"/>
    </location>
</feature>
<feature type="helix" evidence="15">
    <location>
        <begin position="328"/>
        <end position="335"/>
    </location>
</feature>
<feature type="helix" evidence="15">
    <location>
        <begin position="341"/>
        <end position="345"/>
    </location>
</feature>
<feature type="strand" evidence="15">
    <location>
        <begin position="355"/>
        <end position="362"/>
    </location>
</feature>
<feature type="helix" evidence="15">
    <location>
        <begin position="369"/>
        <end position="381"/>
    </location>
</feature>
<feature type="strand" evidence="15">
    <location>
        <begin position="385"/>
        <end position="391"/>
    </location>
</feature>
<feature type="helix" evidence="15">
    <location>
        <begin position="394"/>
        <end position="397"/>
    </location>
</feature>
<feature type="strand" evidence="15">
    <location>
        <begin position="403"/>
        <end position="405"/>
    </location>
</feature>
<feature type="strand" evidence="15">
    <location>
        <begin position="414"/>
        <end position="422"/>
    </location>
</feature>
<feature type="helix" evidence="15">
    <location>
        <begin position="424"/>
        <end position="429"/>
    </location>
</feature>
<feature type="helix" evidence="15">
    <location>
        <begin position="430"/>
        <end position="444"/>
    </location>
</feature>
<feature type="helix" evidence="15">
    <location>
        <begin position="445"/>
        <end position="447"/>
    </location>
</feature>
<feature type="helix" evidence="15">
    <location>
        <begin position="457"/>
        <end position="459"/>
    </location>
</feature>
<feature type="helix" evidence="15">
    <location>
        <begin position="462"/>
        <end position="464"/>
    </location>
</feature>
<feature type="helix" evidence="15">
    <location>
        <begin position="472"/>
        <end position="476"/>
    </location>
</feature>
<feature type="helix" evidence="15">
    <location>
        <begin position="478"/>
        <end position="490"/>
    </location>
</feature>
<feature type="helix" evidence="15">
    <location>
        <begin position="491"/>
        <end position="493"/>
    </location>
</feature>
<feature type="helix" evidence="15">
    <location>
        <begin position="494"/>
        <end position="504"/>
    </location>
</feature>
<proteinExistence type="evidence at protein level"/>
<dbReference type="EC" id="1.21.3.3"/>
<dbReference type="EMBL" id="S65550">
    <property type="protein sequence ID" value="AAB20352.1"/>
    <property type="molecule type" value="mRNA"/>
</dbReference>
<dbReference type="EMBL" id="AF005655">
    <property type="protein sequence ID" value="AAC39358.1"/>
    <property type="molecule type" value="Genomic_DNA"/>
</dbReference>
<dbReference type="PIR" id="A41533">
    <property type="entry name" value="A41533"/>
</dbReference>
<dbReference type="PDB" id="3D2D">
    <property type="method" value="X-ray"/>
    <property type="resolution" value="2.80 A"/>
    <property type="chains" value="A=1-21, A=24-538"/>
</dbReference>
<dbReference type="PDB" id="3D2H">
    <property type="method" value="X-ray"/>
    <property type="resolution" value="1.65 A"/>
    <property type="chains" value="A=1-21, A=24-538"/>
</dbReference>
<dbReference type="PDB" id="3D2J">
    <property type="method" value="X-ray"/>
    <property type="resolution" value="2.05 A"/>
    <property type="chains" value="A=1-21, A=24-538"/>
</dbReference>
<dbReference type="PDB" id="3FW7">
    <property type="method" value="X-ray"/>
    <property type="resolution" value="1.82 A"/>
    <property type="chains" value="A=24-520"/>
</dbReference>
<dbReference type="PDB" id="3FW8">
    <property type="method" value="X-ray"/>
    <property type="resolution" value="1.50 A"/>
    <property type="chains" value="A=26-520"/>
</dbReference>
<dbReference type="PDB" id="3FW9">
    <property type="method" value="X-ray"/>
    <property type="resolution" value="1.49 A"/>
    <property type="chains" value="A=26-520"/>
</dbReference>
<dbReference type="PDB" id="3FWA">
    <property type="method" value="X-ray"/>
    <property type="resolution" value="1.50 A"/>
    <property type="chains" value="A=26-522"/>
</dbReference>
<dbReference type="PDB" id="3GSY">
    <property type="method" value="X-ray"/>
    <property type="resolution" value="1.63 A"/>
    <property type="chains" value="A=24-538"/>
</dbReference>
<dbReference type="PDB" id="4EC3">
    <property type="method" value="X-ray"/>
    <property type="resolution" value="2.65 A"/>
    <property type="chains" value="A=24-538"/>
</dbReference>
<dbReference type="PDB" id="4PZF">
    <property type="method" value="X-ray"/>
    <property type="resolution" value="2.20 A"/>
    <property type="chains" value="A/B/C/D=1-538"/>
</dbReference>
<dbReference type="PDBsum" id="3D2D"/>
<dbReference type="PDBsum" id="3D2H"/>
<dbReference type="PDBsum" id="3D2J"/>
<dbReference type="PDBsum" id="3FW7"/>
<dbReference type="PDBsum" id="3FW8"/>
<dbReference type="PDBsum" id="3FW9"/>
<dbReference type="PDBsum" id="3FWA"/>
<dbReference type="PDBsum" id="3GSY"/>
<dbReference type="PDBsum" id="4EC3"/>
<dbReference type="PDBsum" id="4PZF"/>
<dbReference type="SMR" id="P30986"/>
<dbReference type="CAZy" id="AA7">
    <property type="family name" value="Auxiliary Activities 7"/>
</dbReference>
<dbReference type="GlyCosmos" id="P30986">
    <property type="glycosylation" value="3 sites, No reported glycans"/>
</dbReference>
<dbReference type="iPTMnet" id="P30986"/>
<dbReference type="KEGG" id="ag:AAC39358"/>
<dbReference type="BioCyc" id="MetaCyc:MONOMER-12338"/>
<dbReference type="BRENDA" id="1.21.3.3">
    <property type="organism ID" value="2173"/>
</dbReference>
<dbReference type="UniPathway" id="UPA00319">
    <property type="reaction ID" value="UER00450"/>
</dbReference>
<dbReference type="EvolutionaryTrace" id="P30986"/>
<dbReference type="GO" id="GO:0031410">
    <property type="term" value="C:cytoplasmic vesicle"/>
    <property type="evidence" value="ECO:0007669"/>
    <property type="project" value="UniProtKB-KW"/>
</dbReference>
<dbReference type="GO" id="GO:0071949">
    <property type="term" value="F:FAD binding"/>
    <property type="evidence" value="ECO:0007669"/>
    <property type="project" value="InterPro"/>
</dbReference>
<dbReference type="GO" id="GO:0050468">
    <property type="term" value="F:reticuline oxidase activity"/>
    <property type="evidence" value="ECO:0007669"/>
    <property type="project" value="UniProtKB-EC"/>
</dbReference>
<dbReference type="GO" id="GO:0009820">
    <property type="term" value="P:alkaloid metabolic process"/>
    <property type="evidence" value="ECO:0007669"/>
    <property type="project" value="UniProtKB-KW"/>
</dbReference>
<dbReference type="Gene3D" id="3.30.465.10">
    <property type="match status" value="1"/>
</dbReference>
<dbReference type="Gene3D" id="3.40.462.20">
    <property type="match status" value="1"/>
</dbReference>
<dbReference type="Gene3D" id="3.30.43.10">
    <property type="entry name" value="Uridine Diphospho-n-acetylenolpyruvylglucosamine Reductase, domain 2"/>
    <property type="match status" value="1"/>
</dbReference>
<dbReference type="InterPro" id="IPR012951">
    <property type="entry name" value="BBE"/>
</dbReference>
<dbReference type="InterPro" id="IPR016166">
    <property type="entry name" value="FAD-bd_PCMH"/>
</dbReference>
<dbReference type="InterPro" id="IPR036318">
    <property type="entry name" value="FAD-bd_PCMH-like_sf"/>
</dbReference>
<dbReference type="InterPro" id="IPR016167">
    <property type="entry name" value="FAD-bd_PCMH_sub1"/>
</dbReference>
<dbReference type="InterPro" id="IPR016169">
    <property type="entry name" value="FAD-bd_PCMH_sub2"/>
</dbReference>
<dbReference type="InterPro" id="IPR006094">
    <property type="entry name" value="Oxid_FAD_bind_N"/>
</dbReference>
<dbReference type="InterPro" id="IPR006093">
    <property type="entry name" value="Oxy_OxRdtase_FAD_BS"/>
</dbReference>
<dbReference type="PANTHER" id="PTHR32448">
    <property type="entry name" value="OS08G0158400 PROTEIN"/>
    <property type="match status" value="1"/>
</dbReference>
<dbReference type="Pfam" id="PF08031">
    <property type="entry name" value="BBE"/>
    <property type="match status" value="1"/>
</dbReference>
<dbReference type="Pfam" id="PF01565">
    <property type="entry name" value="FAD_binding_4"/>
    <property type="match status" value="1"/>
</dbReference>
<dbReference type="SUPFAM" id="SSF56176">
    <property type="entry name" value="FAD-binding/transporter-associated domain-like"/>
    <property type="match status" value="1"/>
</dbReference>
<dbReference type="PROSITE" id="PS51387">
    <property type="entry name" value="FAD_PCMH"/>
    <property type="match status" value="1"/>
</dbReference>
<dbReference type="PROSITE" id="PS00862">
    <property type="entry name" value="OX2_COVAL_FAD"/>
    <property type="match status" value="1"/>
</dbReference>
<reference key="1">
    <citation type="journal article" date="1991" name="Proc. Natl. Acad. Sci. U.S.A.">
        <title>Molecular cloning, expression, and induction of berberine bridge enzyme, an enzyme essential to the formation of benzophenanthridine alkaloids in the response of plants to pathogenic attack.</title>
        <authorList>
            <person name="Dittrich H."/>
            <person name="Kutchan T.M."/>
        </authorList>
    </citation>
    <scope>NUCLEOTIDE SEQUENCE [MRNA]</scope>
    <scope>PROTEIN SEQUENCE OF 24-47; 81-88; 238-243; 351-354 AND 473-483</scope>
</reference>
<reference key="2">
    <citation type="journal article" date="1998" name="Plant Mol. Biol.">
        <title>Isolation and analysis of a gene bbe1 encoding the berberine bridge enzyme from the California poppy Eschscholzia californica.</title>
        <authorList>
            <person name="Hauschild K."/>
            <person name="Pauli H.H."/>
            <person name="Kutchan T.M."/>
        </authorList>
    </citation>
    <scope>NUCLEOTIDE SEQUENCE [GENOMIC DNA]</scope>
</reference>
<reference key="3">
    <citation type="journal article" date="2006" name="J. Biol. Chem.">
        <title>Biochemical evidence that berberine bridge enzyme belongs to a novel family of flavoproteins containing a bi-covalently attached FAD cofactor.</title>
        <authorList>
            <person name="Winkler A."/>
            <person name="Hartner F."/>
            <person name="Kutchan T.M."/>
            <person name="Glieder A."/>
            <person name="Macheroux P."/>
        </authorList>
    </citation>
    <scope>PROTEIN SEQUENCE OF 24-28; 101-127 AND 159-185</scope>
    <scope>COFACTOR</scope>
    <scope>GLYCOSYLATION AT ASN-38</scope>
</reference>
<reference key="4">
    <citation type="journal article" date="1986" name="Planta">
        <title>Intracellular compartmentation of two enzymes of berberine biosynthesis in plant cell cultures.</title>
        <authorList>
            <person name="Amann M."/>
            <person name="Wanner G."/>
            <person name="Zenk M.H."/>
        </authorList>
    </citation>
    <scope>SUBCELLULAR LOCATION</scope>
</reference>
<reference evidence="8 9 10 11" key="5">
    <citation type="journal article" date="2009" name="J. Biol. Chem.">
        <title>Structural and mechanistic studies reveal the functional role of bicovalent flavinylation in berberine bridge enzyme.</title>
        <authorList>
            <person name="Winkler A."/>
            <person name="Motz K."/>
            <person name="Riedl S."/>
            <person name="Puhl M."/>
            <person name="Macheroux P."/>
            <person name="Gruber K."/>
        </authorList>
    </citation>
    <scope>X-RAY CRYSTALLOGRAPHY (1.49 ANGSTROMS) OF 26-520 IN COMPLEX WITH FAD</scope>
    <scope>DISULFIDE BOND</scope>
    <scope>GLYCOSYLATION AT ASN-471</scope>
    <scope>COFACTOR</scope>
</reference>
<name>RETO_ESCCA</name>
<gene>
    <name type="primary">BBE1</name>
</gene>
<evidence type="ECO:0000255" key="1"/>
<evidence type="ECO:0000255" key="2">
    <source>
        <dbReference type="PROSITE-ProRule" id="PRU00718"/>
    </source>
</evidence>
<evidence type="ECO:0000269" key="3">
    <source>
    </source>
</evidence>
<evidence type="ECO:0000269" key="4">
    <source>
    </source>
</evidence>
<evidence type="ECO:0000269" key="5">
    <source>
    </source>
</evidence>
<evidence type="ECO:0000269" key="6">
    <source>
    </source>
</evidence>
<evidence type="ECO:0000305" key="7"/>
<evidence type="ECO:0007744" key="8">
    <source>
        <dbReference type="PDB" id="3FW7"/>
    </source>
</evidence>
<evidence type="ECO:0007744" key="9">
    <source>
        <dbReference type="PDB" id="3FW8"/>
    </source>
</evidence>
<evidence type="ECO:0007744" key="10">
    <source>
        <dbReference type="PDB" id="3FW9"/>
    </source>
</evidence>
<evidence type="ECO:0007744" key="11">
    <source>
        <dbReference type="PDB" id="3FWA"/>
    </source>
</evidence>
<evidence type="ECO:0007829" key="12">
    <source>
        <dbReference type="PDB" id="3D2D"/>
    </source>
</evidence>
<evidence type="ECO:0007829" key="13">
    <source>
        <dbReference type="PDB" id="3D2H"/>
    </source>
</evidence>
<evidence type="ECO:0007829" key="14">
    <source>
        <dbReference type="PDB" id="3D2J"/>
    </source>
</evidence>
<evidence type="ECO:0007829" key="15">
    <source>
        <dbReference type="PDB" id="3FW9"/>
    </source>
</evidence>
<evidence type="ECO:0007829" key="16">
    <source>
        <dbReference type="PDB" id="3FWA"/>
    </source>
</evidence>
<evidence type="ECO:0007829" key="17">
    <source>
        <dbReference type="PDB" id="4PZF"/>
    </source>
</evidence>
<keyword id="KW-0002">3D-structure</keyword>
<keyword id="KW-0017">Alkaloid metabolism</keyword>
<keyword id="KW-0968">Cytoplasmic vesicle</keyword>
<keyword id="KW-0903">Direct protein sequencing</keyword>
<keyword id="KW-1015">Disulfide bond</keyword>
<keyword id="KW-0274">FAD</keyword>
<keyword id="KW-0285">Flavoprotein</keyword>
<keyword id="KW-0325">Glycoprotein</keyword>
<keyword id="KW-0560">Oxidoreductase</keyword>
<keyword id="KW-0732">Signal</keyword>
<organism>
    <name type="scientific">Eschscholzia californica</name>
    <name type="common">California poppy</name>
    <dbReference type="NCBI Taxonomy" id="3467"/>
    <lineage>
        <taxon>Eukaryota</taxon>
        <taxon>Viridiplantae</taxon>
        <taxon>Streptophyta</taxon>
        <taxon>Embryophyta</taxon>
        <taxon>Tracheophyta</taxon>
        <taxon>Spermatophyta</taxon>
        <taxon>Magnoliopsida</taxon>
        <taxon>Ranunculales</taxon>
        <taxon>Papaveraceae</taxon>
        <taxon>Papaveroideae</taxon>
        <taxon>Eschscholzia</taxon>
    </lineage>
</organism>